<organism>
    <name type="scientific">Rattus norvegicus</name>
    <name type="common">Rat</name>
    <dbReference type="NCBI Taxonomy" id="10116"/>
    <lineage>
        <taxon>Eukaryota</taxon>
        <taxon>Metazoa</taxon>
        <taxon>Chordata</taxon>
        <taxon>Craniata</taxon>
        <taxon>Vertebrata</taxon>
        <taxon>Euteleostomi</taxon>
        <taxon>Mammalia</taxon>
        <taxon>Eutheria</taxon>
        <taxon>Euarchontoglires</taxon>
        <taxon>Glires</taxon>
        <taxon>Rodentia</taxon>
        <taxon>Myomorpha</taxon>
        <taxon>Muroidea</taxon>
        <taxon>Muridae</taxon>
        <taxon>Murinae</taxon>
        <taxon>Rattus</taxon>
    </lineage>
</organism>
<comment type="function">
    <text evidence="1 2">Component of the COP9 signalosome complex (CSN), a complex involved in various cellular and developmental processes (By similarity). The CSN complex is an essential regulator of the ubiquitin (Ubl) conjugation pathway by mediating the deneddylation of the cullin subunits of SCF-type E3 ligase complexes, leading to decrease the Ubl ligase activity of SCF-type complexes such as SCF, CSA or DDB2 (By similarity). The complex is also involved in phosphorylation of p53/TP53, c-jun/JUN, IkappaBalpha/NFKBIA, ITPK1 and IRF8/ICSBP, possibly via its association with CK2 and PKD kinases (By similarity). CSN-dependent phosphorylation of TP53 and JUN promotes and protects degradation by the Ubl system, respectively (By similarity). Essential to maintain the survival of epiblast cells and thus the development of the postimplantation embryo (By similarity).</text>
</comment>
<comment type="subunit">
    <text evidence="2">Component of the CSN complex, composed of COPS1/GPS1, COPS2, COPS3, COPS4, COPS5, COPS6, COPS7 (COPS7A or COPS7B), COPS8 and COPS9 (By similarity). In the complex, it probably interacts directly with COPS1, COPS4, COPS8 and COPS9 (By similarity). Interacts with CK2 and PKD (By similarity). Interacts with the translation initiation factor EIF3S6 and IKBKG (By similarity). Interacts with ERCC6 (By similarity).</text>
</comment>
<comment type="subcellular location">
    <subcellularLocation>
        <location evidence="2">Cytoplasm</location>
    </subcellularLocation>
    <subcellularLocation>
        <location evidence="2">Nucleus</location>
    </subcellularLocation>
</comment>
<comment type="similarity">
    <text evidence="5">Belongs to the CSN3 family.</text>
</comment>
<gene>
    <name type="primary">Cops3</name>
    <name type="synonym">Csn3</name>
</gene>
<proteinExistence type="evidence at protein level"/>
<protein>
    <recommendedName>
        <fullName>COP9 signalosome complex subunit 3</fullName>
        <shortName>SGN3</shortName>
        <shortName>Signalosome subunit 3</shortName>
    </recommendedName>
</protein>
<accession>Q68FW9</accession>
<evidence type="ECO:0000250" key="1">
    <source>
        <dbReference type="UniProtKB" id="O88543"/>
    </source>
</evidence>
<evidence type="ECO:0000250" key="2">
    <source>
        <dbReference type="UniProtKB" id="Q9UNS2"/>
    </source>
</evidence>
<evidence type="ECO:0000255" key="3">
    <source>
        <dbReference type="PROSITE-ProRule" id="PRU01185"/>
    </source>
</evidence>
<evidence type="ECO:0000256" key="4">
    <source>
        <dbReference type="SAM" id="MobiDB-lite"/>
    </source>
</evidence>
<evidence type="ECO:0000305" key="5"/>
<evidence type="ECO:0007744" key="6">
    <source>
    </source>
</evidence>
<name>CSN3_RAT</name>
<dbReference type="EMBL" id="BC079143">
    <property type="protein sequence ID" value="AAH79143.1"/>
    <property type="molecule type" value="mRNA"/>
</dbReference>
<dbReference type="RefSeq" id="NP_001004200.1">
    <property type="nucleotide sequence ID" value="NM_001004200.1"/>
</dbReference>
<dbReference type="SMR" id="Q68FW9"/>
<dbReference type="BioGRID" id="252124">
    <property type="interactions" value="1"/>
</dbReference>
<dbReference type="FunCoup" id="Q68FW9">
    <property type="interactions" value="3677"/>
</dbReference>
<dbReference type="STRING" id="10116.ENSRNOP00000069208"/>
<dbReference type="iPTMnet" id="Q68FW9"/>
<dbReference type="PhosphoSitePlus" id="Q68FW9"/>
<dbReference type="jPOST" id="Q68FW9"/>
<dbReference type="PaxDb" id="10116-ENSRNOP00000004438"/>
<dbReference type="Ensembl" id="ENSRNOT00000091471.2">
    <property type="protein sequence ID" value="ENSRNOP00000069208.1"/>
    <property type="gene ID" value="ENSRNOG00000053943.2"/>
</dbReference>
<dbReference type="GeneID" id="287367"/>
<dbReference type="KEGG" id="rno:287367"/>
<dbReference type="UCSC" id="RGD:1303002">
    <property type="organism name" value="rat"/>
</dbReference>
<dbReference type="AGR" id="RGD:1303002"/>
<dbReference type="CTD" id="8533"/>
<dbReference type="RGD" id="1303002">
    <property type="gene designation" value="Cops3"/>
</dbReference>
<dbReference type="eggNOG" id="KOG2582">
    <property type="taxonomic scope" value="Eukaryota"/>
</dbReference>
<dbReference type="GeneTree" id="ENSGT00940000153653"/>
<dbReference type="HOGENOM" id="CLU_028825_0_1_1"/>
<dbReference type="InParanoid" id="Q68FW9"/>
<dbReference type="OMA" id="NHYHDLV"/>
<dbReference type="OrthoDB" id="29061at2759"/>
<dbReference type="PhylomeDB" id="Q68FW9"/>
<dbReference type="TreeFam" id="TF101146"/>
<dbReference type="Reactome" id="R-RNO-5696394">
    <property type="pathway name" value="DNA Damage Recognition in GG-NER"/>
</dbReference>
<dbReference type="Reactome" id="R-RNO-6781823">
    <property type="pathway name" value="Formation of TC-NER Pre-Incision Complex"/>
</dbReference>
<dbReference type="Reactome" id="R-RNO-8856825">
    <property type="pathway name" value="Cargo recognition for clathrin-mediated endocytosis"/>
</dbReference>
<dbReference type="Reactome" id="R-RNO-8951664">
    <property type="pathway name" value="Neddylation"/>
</dbReference>
<dbReference type="PRO" id="PR:Q68FW9"/>
<dbReference type="Proteomes" id="UP000002494">
    <property type="component" value="Chromosome 10"/>
</dbReference>
<dbReference type="Bgee" id="ENSRNOG00000053943">
    <property type="expression patterns" value="Expressed in quadriceps femoris and 20 other cell types or tissues"/>
</dbReference>
<dbReference type="GO" id="GO:0008180">
    <property type="term" value="C:COP9 signalosome"/>
    <property type="evidence" value="ECO:0000266"/>
    <property type="project" value="RGD"/>
</dbReference>
<dbReference type="GO" id="GO:0005737">
    <property type="term" value="C:cytoplasm"/>
    <property type="evidence" value="ECO:0000266"/>
    <property type="project" value="RGD"/>
</dbReference>
<dbReference type="GO" id="GO:0005829">
    <property type="term" value="C:cytosol"/>
    <property type="evidence" value="ECO:0007669"/>
    <property type="project" value="Ensembl"/>
</dbReference>
<dbReference type="GO" id="GO:0005654">
    <property type="term" value="C:nucleoplasm"/>
    <property type="evidence" value="ECO:0007669"/>
    <property type="project" value="Ensembl"/>
</dbReference>
<dbReference type="GO" id="GO:0005634">
    <property type="term" value="C:nucleus"/>
    <property type="evidence" value="ECO:0000266"/>
    <property type="project" value="RGD"/>
</dbReference>
<dbReference type="GO" id="GO:0048471">
    <property type="term" value="C:perinuclear region of cytoplasm"/>
    <property type="evidence" value="ECO:0000266"/>
    <property type="project" value="RGD"/>
</dbReference>
<dbReference type="GO" id="GO:0001701">
    <property type="term" value="P:in utero embryonic development"/>
    <property type="evidence" value="ECO:0000266"/>
    <property type="project" value="RGD"/>
</dbReference>
<dbReference type="GO" id="GO:0000338">
    <property type="term" value="P:protein deneddylation"/>
    <property type="evidence" value="ECO:0000266"/>
    <property type="project" value="RGD"/>
</dbReference>
<dbReference type="GO" id="GO:0043516">
    <property type="term" value="P:regulation of DNA damage response, signal transduction by p53 class mediator"/>
    <property type="evidence" value="ECO:0000266"/>
    <property type="project" value="RGD"/>
</dbReference>
<dbReference type="GO" id="GO:0006511">
    <property type="term" value="P:ubiquitin-dependent protein catabolic process"/>
    <property type="evidence" value="ECO:0000318"/>
    <property type="project" value="GO_Central"/>
</dbReference>
<dbReference type="FunFam" id="1.10.10.10:FF:000354">
    <property type="entry name" value="COP9 signalosome complex subunit 3"/>
    <property type="match status" value="1"/>
</dbReference>
<dbReference type="FunFam" id="1.25.40.570:FF:000008">
    <property type="entry name" value="COP9 signalosome complex subunit 3"/>
    <property type="match status" value="1"/>
</dbReference>
<dbReference type="Gene3D" id="1.25.40.570">
    <property type="match status" value="1"/>
</dbReference>
<dbReference type="InterPro" id="IPR055089">
    <property type="entry name" value="COP9_N"/>
</dbReference>
<dbReference type="InterPro" id="IPR050756">
    <property type="entry name" value="CSN3"/>
</dbReference>
<dbReference type="InterPro" id="IPR048621">
    <property type="entry name" value="CSN3_C"/>
</dbReference>
<dbReference type="InterPro" id="IPR000717">
    <property type="entry name" value="PCI_dom"/>
</dbReference>
<dbReference type="InterPro" id="IPR036390">
    <property type="entry name" value="WH_DNA-bd_sf"/>
</dbReference>
<dbReference type="PANTHER" id="PTHR10758">
    <property type="entry name" value="26S PROTEASOME NON-ATPASE REGULATORY SUBUNIT 3/COP9 SIGNALOSOME COMPLEX SUBUNIT 3"/>
    <property type="match status" value="1"/>
</dbReference>
<dbReference type="PANTHER" id="PTHR10758:SF1">
    <property type="entry name" value="COP9 SIGNALOSOME COMPLEX SUBUNIT 3"/>
    <property type="match status" value="1"/>
</dbReference>
<dbReference type="Pfam" id="PF22788">
    <property type="entry name" value="COP9_hel_rpt"/>
    <property type="match status" value="1"/>
</dbReference>
<dbReference type="Pfam" id="PF21215">
    <property type="entry name" value="CSN3-like_C"/>
    <property type="match status" value="1"/>
</dbReference>
<dbReference type="Pfam" id="PF01399">
    <property type="entry name" value="PCI"/>
    <property type="match status" value="1"/>
</dbReference>
<dbReference type="SMART" id="SM00088">
    <property type="entry name" value="PINT"/>
    <property type="match status" value="1"/>
</dbReference>
<dbReference type="SUPFAM" id="SSF46785">
    <property type="entry name" value="Winged helix' DNA-binding domain"/>
    <property type="match status" value="1"/>
</dbReference>
<dbReference type="PROSITE" id="PS50250">
    <property type="entry name" value="PCI"/>
    <property type="match status" value="1"/>
</dbReference>
<reference key="1">
    <citation type="journal article" date="2004" name="Genome Res.">
        <title>The status, quality, and expansion of the NIH full-length cDNA project: the Mammalian Gene Collection (MGC).</title>
        <authorList>
            <consortium name="The MGC Project Team"/>
        </authorList>
    </citation>
    <scope>NUCLEOTIDE SEQUENCE [LARGE SCALE MRNA]</scope>
    <source>
        <tissue>Kidney</tissue>
    </source>
</reference>
<reference key="2">
    <citation type="journal article" date="2012" name="Nat. Commun.">
        <title>Quantitative maps of protein phosphorylation sites across 14 different rat organs and tissues.</title>
        <authorList>
            <person name="Lundby A."/>
            <person name="Secher A."/>
            <person name="Lage K."/>
            <person name="Nordsborg N.B."/>
            <person name="Dmytriyev A."/>
            <person name="Lundby C."/>
            <person name="Olsen J.V."/>
        </authorList>
    </citation>
    <scope>PHOSPHORYLATION [LARGE SCALE ANALYSIS] AT SER-407 AND SER-410</scope>
    <scope>IDENTIFICATION BY MASS SPECTROMETRY [LARGE SCALE ANALYSIS]</scope>
</reference>
<keyword id="KW-0007">Acetylation</keyword>
<keyword id="KW-0963">Cytoplasm</keyword>
<keyword id="KW-0539">Nucleus</keyword>
<keyword id="KW-0597">Phosphoprotein</keyword>
<keyword id="KW-1185">Reference proteome</keyword>
<keyword id="KW-0736">Signalosome</keyword>
<feature type="initiator methionine" description="Removed" evidence="2">
    <location>
        <position position="1"/>
    </location>
</feature>
<feature type="chain" id="PRO_0000312647" description="COP9 signalosome complex subunit 3">
    <location>
        <begin position="2"/>
        <end position="423"/>
    </location>
</feature>
<feature type="domain" description="PCI" evidence="3">
    <location>
        <begin position="197"/>
        <end position="365"/>
    </location>
</feature>
<feature type="region of interest" description="Disordered" evidence="4">
    <location>
        <begin position="402"/>
        <end position="423"/>
    </location>
</feature>
<feature type="modified residue" description="N-acetylalanine" evidence="2">
    <location>
        <position position="2"/>
    </location>
</feature>
<feature type="modified residue" description="Phosphoserine" evidence="6">
    <location>
        <position position="407"/>
    </location>
</feature>
<feature type="modified residue" description="Phosphoserine" evidence="6">
    <location>
        <position position="410"/>
    </location>
</feature>
<feature type="modified residue" description="Phosphoserine" evidence="2">
    <location>
        <position position="423"/>
    </location>
</feature>
<sequence length="423" mass="47859">MASALEQFVNSVRQLSAQGQMTQLCELINKSGELLAKNLSHLDTVLGALDVQEHSLGVLAVLFVKFSMPSVPDFETLFSQVQLFISTCNGEHIRYATDTFAGLCHQLTNALVERKQPLRGIGILKQAIDKMQMNTNQLTSVHADLCQLCLLAKCFKPALPYLDVDMMDICKENGAYDAKHFLCYYYYGGMIYTGLKNFERALYFYEQAITTPAMAVSHIMLESYKKYILVSLILLGKVQQLPKYTSQIVGRFIKPLSNAYHELAQVYSTNNPSELRNLVNKHSETFTRDNNMGLVKQCLSSLYKKNIQRLTKTFLTLSLQDMASRVQLSGPQEAEKYVLHMIEDGEIFASINQKDGMVSFHDNPEKYNNPAMLHNIDQEMLKCIELDERLKAMDQEITVNPQFVQKSMGSQEDDSGNKPSSYS</sequence>